<protein>
    <recommendedName>
        <fullName evidence="1">Glutamate--tRNA ligase</fullName>
        <ecNumber evidence="1">6.1.1.17</ecNumber>
    </recommendedName>
    <alternativeName>
        <fullName evidence="1">Glutamyl-tRNA synthetase</fullName>
        <shortName evidence="1">GluRS</shortName>
    </alternativeName>
</protein>
<evidence type="ECO:0000255" key="1">
    <source>
        <dbReference type="HAMAP-Rule" id="MF_00022"/>
    </source>
</evidence>
<evidence type="ECO:0000305" key="2"/>
<comment type="function">
    <text evidence="1">Catalyzes the attachment of glutamate to tRNA(Glu) in a two-step reaction: glutamate is first activated by ATP to form Glu-AMP and then transferred to the acceptor end of tRNA(Glu).</text>
</comment>
<comment type="catalytic activity">
    <reaction evidence="1">
        <text>tRNA(Glu) + L-glutamate + ATP = L-glutamyl-tRNA(Glu) + AMP + diphosphate</text>
        <dbReference type="Rhea" id="RHEA:23540"/>
        <dbReference type="Rhea" id="RHEA-COMP:9663"/>
        <dbReference type="Rhea" id="RHEA-COMP:9680"/>
        <dbReference type="ChEBI" id="CHEBI:29985"/>
        <dbReference type="ChEBI" id="CHEBI:30616"/>
        <dbReference type="ChEBI" id="CHEBI:33019"/>
        <dbReference type="ChEBI" id="CHEBI:78442"/>
        <dbReference type="ChEBI" id="CHEBI:78520"/>
        <dbReference type="ChEBI" id="CHEBI:456215"/>
        <dbReference type="EC" id="6.1.1.17"/>
    </reaction>
</comment>
<comment type="subunit">
    <text evidence="1">Monomer.</text>
</comment>
<comment type="subcellular location">
    <subcellularLocation>
        <location evidence="1">Cytoplasm</location>
    </subcellularLocation>
</comment>
<comment type="similarity">
    <text evidence="1">Belongs to the class-I aminoacyl-tRNA synthetase family. Glutamate--tRNA ligase type 1 subfamily.</text>
</comment>
<comment type="sequence caution" evidence="2">
    <conflict type="erroneous initiation">
        <sequence resource="EMBL-CDS" id="ABM75091"/>
    </conflict>
</comment>
<accession>A2C0T1</accession>
<reference key="1">
    <citation type="journal article" date="2007" name="PLoS Genet.">
        <title>Patterns and implications of gene gain and loss in the evolution of Prochlorococcus.</title>
        <authorList>
            <person name="Kettler G.C."/>
            <person name="Martiny A.C."/>
            <person name="Huang K."/>
            <person name="Zucker J."/>
            <person name="Coleman M.L."/>
            <person name="Rodrigue S."/>
            <person name="Chen F."/>
            <person name="Lapidus A."/>
            <person name="Ferriera S."/>
            <person name="Johnson J."/>
            <person name="Steglich C."/>
            <person name="Church G.M."/>
            <person name="Richardson P."/>
            <person name="Chisholm S.W."/>
        </authorList>
    </citation>
    <scope>NUCLEOTIDE SEQUENCE [LARGE SCALE GENOMIC DNA]</scope>
    <source>
        <strain>NATL1A</strain>
    </source>
</reference>
<gene>
    <name evidence="1" type="primary">gltX</name>
    <name type="ordered locus">NATL1_05291</name>
</gene>
<name>SYE_PROM1</name>
<feature type="chain" id="PRO_0000330990" description="Glutamate--tRNA ligase">
    <location>
        <begin position="1"/>
        <end position="476"/>
    </location>
</feature>
<feature type="short sequence motif" description="'HIGH' region" evidence="1">
    <location>
        <begin position="9"/>
        <end position="19"/>
    </location>
</feature>
<feature type="short sequence motif" description="'KMSKS' region" evidence="1">
    <location>
        <begin position="248"/>
        <end position="252"/>
    </location>
</feature>
<feature type="binding site" evidence="1">
    <location>
        <position position="251"/>
    </location>
    <ligand>
        <name>ATP</name>
        <dbReference type="ChEBI" id="CHEBI:30616"/>
    </ligand>
</feature>
<dbReference type="EC" id="6.1.1.17" evidence="1"/>
<dbReference type="EMBL" id="CP000553">
    <property type="protein sequence ID" value="ABM75091.1"/>
    <property type="status" value="ALT_INIT"/>
    <property type="molecule type" value="Genomic_DNA"/>
</dbReference>
<dbReference type="RefSeq" id="WP_041700675.1">
    <property type="nucleotide sequence ID" value="NC_008819.1"/>
</dbReference>
<dbReference type="SMR" id="A2C0T1"/>
<dbReference type="KEGG" id="pme:NATL1_05291"/>
<dbReference type="eggNOG" id="COG0008">
    <property type="taxonomic scope" value="Bacteria"/>
</dbReference>
<dbReference type="HOGENOM" id="CLU_015768_6_0_3"/>
<dbReference type="Proteomes" id="UP000002592">
    <property type="component" value="Chromosome"/>
</dbReference>
<dbReference type="GO" id="GO:0005829">
    <property type="term" value="C:cytosol"/>
    <property type="evidence" value="ECO:0007669"/>
    <property type="project" value="TreeGrafter"/>
</dbReference>
<dbReference type="GO" id="GO:0005524">
    <property type="term" value="F:ATP binding"/>
    <property type="evidence" value="ECO:0007669"/>
    <property type="project" value="UniProtKB-UniRule"/>
</dbReference>
<dbReference type="GO" id="GO:0004818">
    <property type="term" value="F:glutamate-tRNA ligase activity"/>
    <property type="evidence" value="ECO:0007669"/>
    <property type="project" value="UniProtKB-UniRule"/>
</dbReference>
<dbReference type="GO" id="GO:0000049">
    <property type="term" value="F:tRNA binding"/>
    <property type="evidence" value="ECO:0007669"/>
    <property type="project" value="InterPro"/>
</dbReference>
<dbReference type="GO" id="GO:0008270">
    <property type="term" value="F:zinc ion binding"/>
    <property type="evidence" value="ECO:0007669"/>
    <property type="project" value="InterPro"/>
</dbReference>
<dbReference type="GO" id="GO:0006424">
    <property type="term" value="P:glutamyl-tRNA aminoacylation"/>
    <property type="evidence" value="ECO:0007669"/>
    <property type="project" value="UniProtKB-UniRule"/>
</dbReference>
<dbReference type="CDD" id="cd00808">
    <property type="entry name" value="GluRS_core"/>
    <property type="match status" value="1"/>
</dbReference>
<dbReference type="FunFam" id="3.40.50.620:FF:000007">
    <property type="entry name" value="Glutamate--tRNA ligase"/>
    <property type="match status" value="1"/>
</dbReference>
<dbReference type="Gene3D" id="1.10.10.350">
    <property type="match status" value="1"/>
</dbReference>
<dbReference type="Gene3D" id="1.10.8.70">
    <property type="entry name" value="Glutamate-tRNA synthetase, class I, anticodon-binding domain 1"/>
    <property type="match status" value="1"/>
</dbReference>
<dbReference type="Gene3D" id="1.10.1160.10">
    <property type="entry name" value="Glutamyl-trna Synthetase, Domain 2"/>
    <property type="match status" value="1"/>
</dbReference>
<dbReference type="Gene3D" id="3.90.800.10">
    <property type="entry name" value="Glutamyl-tRNA Synthetase, Domain 3"/>
    <property type="match status" value="1"/>
</dbReference>
<dbReference type="Gene3D" id="3.40.50.620">
    <property type="entry name" value="HUPs"/>
    <property type="match status" value="1"/>
</dbReference>
<dbReference type="HAMAP" id="MF_00022">
    <property type="entry name" value="Glu_tRNA_synth_type1"/>
    <property type="match status" value="1"/>
</dbReference>
<dbReference type="InterPro" id="IPR045462">
    <property type="entry name" value="aa-tRNA-synth_I_cd-bd"/>
</dbReference>
<dbReference type="InterPro" id="IPR020751">
    <property type="entry name" value="aa-tRNA-synth_I_codon-bd_sub2"/>
</dbReference>
<dbReference type="InterPro" id="IPR001412">
    <property type="entry name" value="aa-tRNA-synth_I_CS"/>
</dbReference>
<dbReference type="InterPro" id="IPR008925">
    <property type="entry name" value="aa_tRNA-synth_I_cd-bd_sf"/>
</dbReference>
<dbReference type="InterPro" id="IPR004527">
    <property type="entry name" value="Glu-tRNA-ligase_bac/mito"/>
</dbReference>
<dbReference type="InterPro" id="IPR020752">
    <property type="entry name" value="Glu-tRNA-synth_I_codon-bd_sub1"/>
</dbReference>
<dbReference type="InterPro" id="IPR000924">
    <property type="entry name" value="Glu/Gln-tRNA-synth"/>
</dbReference>
<dbReference type="InterPro" id="IPR020058">
    <property type="entry name" value="Glu/Gln-tRNA-synth_Ib_cat-dom"/>
</dbReference>
<dbReference type="InterPro" id="IPR020061">
    <property type="entry name" value="Glu_tRNA_lig_a-bdl"/>
</dbReference>
<dbReference type="InterPro" id="IPR049940">
    <property type="entry name" value="GluQ/Sye"/>
</dbReference>
<dbReference type="InterPro" id="IPR033910">
    <property type="entry name" value="GluRS_core"/>
</dbReference>
<dbReference type="InterPro" id="IPR014729">
    <property type="entry name" value="Rossmann-like_a/b/a_fold"/>
</dbReference>
<dbReference type="NCBIfam" id="TIGR00464">
    <property type="entry name" value="gltX_bact"/>
    <property type="match status" value="1"/>
</dbReference>
<dbReference type="PANTHER" id="PTHR43311">
    <property type="entry name" value="GLUTAMATE--TRNA LIGASE"/>
    <property type="match status" value="1"/>
</dbReference>
<dbReference type="PANTHER" id="PTHR43311:SF2">
    <property type="entry name" value="GLUTAMATE--TRNA LIGASE, MITOCHONDRIAL-RELATED"/>
    <property type="match status" value="1"/>
</dbReference>
<dbReference type="Pfam" id="PF19269">
    <property type="entry name" value="Anticodon_2"/>
    <property type="match status" value="1"/>
</dbReference>
<dbReference type="Pfam" id="PF00749">
    <property type="entry name" value="tRNA-synt_1c"/>
    <property type="match status" value="1"/>
</dbReference>
<dbReference type="PRINTS" id="PR00987">
    <property type="entry name" value="TRNASYNTHGLU"/>
</dbReference>
<dbReference type="SUPFAM" id="SSF48163">
    <property type="entry name" value="An anticodon-binding domain of class I aminoacyl-tRNA synthetases"/>
    <property type="match status" value="1"/>
</dbReference>
<dbReference type="SUPFAM" id="SSF52374">
    <property type="entry name" value="Nucleotidylyl transferase"/>
    <property type="match status" value="1"/>
</dbReference>
<dbReference type="PROSITE" id="PS00178">
    <property type="entry name" value="AA_TRNA_LIGASE_I"/>
    <property type="match status" value="1"/>
</dbReference>
<proteinExistence type="inferred from homology"/>
<keyword id="KW-0030">Aminoacyl-tRNA synthetase</keyword>
<keyword id="KW-0067">ATP-binding</keyword>
<keyword id="KW-0963">Cytoplasm</keyword>
<keyword id="KW-0436">Ligase</keyword>
<keyword id="KW-0547">Nucleotide-binding</keyword>
<keyword id="KW-0648">Protein biosynthesis</keyword>
<sequence length="476" mass="53902">MKVRVRLAPSPTGTLHLGTARTALFNWLFAKKEGGTFLLRIEDTDIERSREEYINDIYDGLKWLGINWDESPTIQSERVNEHKQIIKTLVDKGFAYKCYASEAELDEMRETQKRNGLAPKYDNRHRNLTPEQESEFIKLGRDPVIRFKISDEKLISWNDLIRGKMTWSGKDLGGDMVIARRAPGNSIGDPLYNLVVVADDSAMKISHVIRGEDHLANTAKQILLYEALDLNIPVFAHTPLILNSEGKKLSKRDGVTSISEFKKMGYTSEAMANYMTLLGWSVPEGINERFNISEVSEIFSFKKVNKASAKFDWDKLNWLNSQVIHEMSAETLLENLEPLFKENGWHLPSHEWGINLVGLIGPSMVLINDGVDQAKPFFEEQELSDDGKKQLEIKEAAVILKFILEKLADSDAASFSKEKALDLIDQATKSCKVKKGVVMKSLRAALFGTLNGPDLIQSWVLLSRFSKDRARISRLI</sequence>
<organism>
    <name type="scientific">Prochlorococcus marinus (strain NATL1A)</name>
    <dbReference type="NCBI Taxonomy" id="167555"/>
    <lineage>
        <taxon>Bacteria</taxon>
        <taxon>Bacillati</taxon>
        <taxon>Cyanobacteriota</taxon>
        <taxon>Cyanophyceae</taxon>
        <taxon>Synechococcales</taxon>
        <taxon>Prochlorococcaceae</taxon>
        <taxon>Prochlorococcus</taxon>
    </lineage>
</organism>